<name>OXDA_RAT</name>
<gene>
    <name type="primary">Dao</name>
    <name type="synonym">Dao1</name>
</gene>
<evidence type="ECO:0000250" key="1">
    <source>
        <dbReference type="UniProtKB" id="P00371"/>
    </source>
</evidence>
<evidence type="ECO:0000250" key="2">
    <source>
        <dbReference type="UniProtKB" id="P14920"/>
    </source>
</evidence>
<evidence type="ECO:0000250" key="3">
    <source>
        <dbReference type="UniProtKB" id="P18894"/>
    </source>
</evidence>
<evidence type="ECO:0000269" key="4">
    <source>
    </source>
</evidence>
<evidence type="ECO:0000269" key="5">
    <source>
    </source>
</evidence>
<evidence type="ECO:0000269" key="6">
    <source>
    </source>
</evidence>
<evidence type="ECO:0000269" key="7">
    <source>
    </source>
</evidence>
<evidence type="ECO:0000269" key="8">
    <source>
    </source>
</evidence>
<evidence type="ECO:0000269" key="9">
    <source>
    </source>
</evidence>
<evidence type="ECO:0000269" key="10">
    <source>
    </source>
</evidence>
<evidence type="ECO:0000269" key="11">
    <source>
    </source>
</evidence>
<evidence type="ECO:0000269" key="12">
    <source>
    </source>
</evidence>
<evidence type="ECO:0000269" key="13">
    <source>
    </source>
</evidence>
<evidence type="ECO:0000269" key="14">
    <source>
    </source>
</evidence>
<evidence type="ECO:0000305" key="15"/>
<evidence type="ECO:0000305" key="16">
    <source>
    </source>
</evidence>
<protein>
    <recommendedName>
        <fullName>D-amino-acid oxidase</fullName>
        <shortName>DAAO</shortName>
        <shortName>DAMOX</shortName>
        <shortName>DAO</shortName>
        <ecNumber evidence="8 16">1.4.3.3</ecNumber>
    </recommendedName>
</protein>
<accession>O35078</accession>
<proteinExistence type="evidence at protein level"/>
<dbReference type="EC" id="1.4.3.3" evidence="8 16"/>
<dbReference type="EMBL" id="AB003400">
    <property type="protein sequence ID" value="BAA22840.1"/>
    <property type="molecule type" value="mRNA"/>
</dbReference>
<dbReference type="EMBL" id="BC088395">
    <property type="protein sequence ID" value="AAH88395.1"/>
    <property type="molecule type" value="mRNA"/>
</dbReference>
<dbReference type="RefSeq" id="NP_446078.1">
    <property type="nucleotide sequence ID" value="NM_053626.1"/>
</dbReference>
<dbReference type="RefSeq" id="XP_038944931.1">
    <property type="nucleotide sequence ID" value="XM_039089003.2"/>
</dbReference>
<dbReference type="RefSeq" id="XP_063127050.1">
    <property type="nucleotide sequence ID" value="XM_063270980.1"/>
</dbReference>
<dbReference type="RefSeq" id="XP_063127051.1">
    <property type="nucleotide sequence ID" value="XM_063270981.1"/>
</dbReference>
<dbReference type="SMR" id="O35078"/>
<dbReference type="BioGRID" id="250263">
    <property type="interactions" value="173"/>
</dbReference>
<dbReference type="FunCoup" id="O35078">
    <property type="interactions" value="191"/>
</dbReference>
<dbReference type="IntAct" id="O35078">
    <property type="interactions" value="1"/>
</dbReference>
<dbReference type="MINT" id="O35078"/>
<dbReference type="STRING" id="10116.ENSRNOP00000069135"/>
<dbReference type="BindingDB" id="O35078"/>
<dbReference type="ChEMBL" id="CHEMBL5756"/>
<dbReference type="iPTMnet" id="O35078"/>
<dbReference type="PhosphoSitePlus" id="O35078"/>
<dbReference type="PaxDb" id="10116-ENSRNOP00000000881"/>
<dbReference type="Ensembl" id="ENSRNOT00000094356.1">
    <property type="protein sequence ID" value="ENSRNOP00000079300.1"/>
    <property type="gene ID" value="ENSRNOG00000054962.2"/>
</dbReference>
<dbReference type="GeneID" id="114027"/>
<dbReference type="KEGG" id="rno:114027"/>
<dbReference type="UCSC" id="RGD:621138">
    <property type="organism name" value="rat"/>
</dbReference>
<dbReference type="AGR" id="RGD:621138"/>
<dbReference type="CTD" id="1610"/>
<dbReference type="RGD" id="621138">
    <property type="gene designation" value="Dao"/>
</dbReference>
<dbReference type="eggNOG" id="KOG3923">
    <property type="taxonomic scope" value="Eukaryota"/>
</dbReference>
<dbReference type="GeneTree" id="ENSGT00390000018635"/>
<dbReference type="InParanoid" id="O35078"/>
<dbReference type="OMA" id="LWWPYRI"/>
<dbReference type="OrthoDB" id="12533at9989"/>
<dbReference type="PhylomeDB" id="O35078"/>
<dbReference type="TreeFam" id="TF313887"/>
<dbReference type="BRENDA" id="1.4.3.3">
    <property type="organism ID" value="5301"/>
</dbReference>
<dbReference type="Reactome" id="R-RNO-389661">
    <property type="pathway name" value="Glyoxylate metabolism and glycine degradation"/>
</dbReference>
<dbReference type="Reactome" id="R-RNO-9033241">
    <property type="pathway name" value="Peroxisomal protein import"/>
</dbReference>
<dbReference type="SABIO-RK" id="O35078"/>
<dbReference type="PRO" id="PR:O35078"/>
<dbReference type="Proteomes" id="UP000002494">
    <property type="component" value="Chromosome 12"/>
</dbReference>
<dbReference type="GO" id="GO:0042995">
    <property type="term" value="C:cell projection"/>
    <property type="evidence" value="ECO:0007669"/>
    <property type="project" value="UniProtKB-KW"/>
</dbReference>
<dbReference type="GO" id="GO:0005737">
    <property type="term" value="C:cytoplasm"/>
    <property type="evidence" value="ECO:0000266"/>
    <property type="project" value="RGD"/>
</dbReference>
<dbReference type="GO" id="GO:0005829">
    <property type="term" value="C:cytosol"/>
    <property type="evidence" value="ECO:0000266"/>
    <property type="project" value="RGD"/>
</dbReference>
<dbReference type="GO" id="GO:0005615">
    <property type="term" value="C:extracellular space"/>
    <property type="evidence" value="ECO:0000266"/>
    <property type="project" value="RGD"/>
</dbReference>
<dbReference type="GO" id="GO:0005741">
    <property type="term" value="C:mitochondrial outer membrane"/>
    <property type="evidence" value="ECO:0000266"/>
    <property type="project" value="RGD"/>
</dbReference>
<dbReference type="GO" id="GO:0005782">
    <property type="term" value="C:peroxisomal matrix"/>
    <property type="evidence" value="ECO:0000314"/>
    <property type="project" value="UniProtKB"/>
</dbReference>
<dbReference type="GO" id="GO:0005777">
    <property type="term" value="C:peroxisome"/>
    <property type="evidence" value="ECO:0000250"/>
    <property type="project" value="UniProtKB"/>
</dbReference>
<dbReference type="GO" id="GO:0048786">
    <property type="term" value="C:presynaptic active zone"/>
    <property type="evidence" value="ECO:0000314"/>
    <property type="project" value="UniProtKB"/>
</dbReference>
<dbReference type="GO" id="GO:0008718">
    <property type="term" value="F:D-amino-acid dehydrogenase activity"/>
    <property type="evidence" value="ECO:0000266"/>
    <property type="project" value="RGD"/>
</dbReference>
<dbReference type="GO" id="GO:0003884">
    <property type="term" value="F:D-amino-acid oxidase activity"/>
    <property type="evidence" value="ECO:0000266"/>
    <property type="project" value="RGD"/>
</dbReference>
<dbReference type="GO" id="GO:0071949">
    <property type="term" value="F:FAD binding"/>
    <property type="evidence" value="ECO:0000266"/>
    <property type="project" value="RGD"/>
</dbReference>
<dbReference type="GO" id="GO:0043799">
    <property type="term" value="F:glycine oxidase activity"/>
    <property type="evidence" value="ECO:0007669"/>
    <property type="project" value="RHEA"/>
</dbReference>
<dbReference type="GO" id="GO:0042802">
    <property type="term" value="F:identical protein binding"/>
    <property type="evidence" value="ECO:0000266"/>
    <property type="project" value="RGD"/>
</dbReference>
<dbReference type="GO" id="GO:0055130">
    <property type="term" value="P:D-alanine catabolic process"/>
    <property type="evidence" value="ECO:0000266"/>
    <property type="project" value="RGD"/>
</dbReference>
<dbReference type="GO" id="GO:0019478">
    <property type="term" value="P:D-amino acid catabolic process"/>
    <property type="evidence" value="ECO:0000266"/>
    <property type="project" value="RGD"/>
</dbReference>
<dbReference type="GO" id="GO:0036088">
    <property type="term" value="P:D-serine catabolic process"/>
    <property type="evidence" value="ECO:0000266"/>
    <property type="project" value="RGD"/>
</dbReference>
<dbReference type="GO" id="GO:0070178">
    <property type="term" value="P:D-serine metabolic process"/>
    <property type="evidence" value="ECO:0000266"/>
    <property type="project" value="RGD"/>
</dbReference>
<dbReference type="GO" id="GO:0007586">
    <property type="term" value="P:digestion"/>
    <property type="evidence" value="ECO:0000250"/>
    <property type="project" value="UniProtKB"/>
</dbReference>
<dbReference type="GO" id="GO:0042416">
    <property type="term" value="P:dopamine biosynthetic process"/>
    <property type="evidence" value="ECO:0000250"/>
    <property type="project" value="UniProtKB"/>
</dbReference>
<dbReference type="GO" id="GO:0051873">
    <property type="term" value="P:killing by host of symbiont cells"/>
    <property type="evidence" value="ECO:0000266"/>
    <property type="project" value="RGD"/>
</dbReference>
<dbReference type="GO" id="GO:0006551">
    <property type="term" value="P:L-leucine metabolic process"/>
    <property type="evidence" value="ECO:0000266"/>
    <property type="project" value="RGD"/>
</dbReference>
<dbReference type="GO" id="GO:0070945">
    <property type="term" value="P:neutrophil-mediated killing of gram-negative bacterium"/>
    <property type="evidence" value="ECO:0000250"/>
    <property type="project" value="UniProtKB"/>
</dbReference>
<dbReference type="GO" id="GO:0006562">
    <property type="term" value="P:proline catabolic process"/>
    <property type="evidence" value="ECO:0000266"/>
    <property type="project" value="RGD"/>
</dbReference>
<dbReference type="FunFam" id="3.30.9.10:FF:000004">
    <property type="entry name" value="D-amino-acid oxidase"/>
    <property type="match status" value="1"/>
</dbReference>
<dbReference type="Gene3D" id="3.30.9.10">
    <property type="entry name" value="D-Amino Acid Oxidase, subunit A, domain 2"/>
    <property type="match status" value="1"/>
</dbReference>
<dbReference type="Gene3D" id="3.40.50.720">
    <property type="entry name" value="NAD(P)-binding Rossmann-like Domain"/>
    <property type="match status" value="1"/>
</dbReference>
<dbReference type="InterPro" id="IPR006181">
    <property type="entry name" value="D-amino_acid_oxidase_CS"/>
</dbReference>
<dbReference type="InterPro" id="IPR023209">
    <property type="entry name" value="DAO"/>
</dbReference>
<dbReference type="InterPro" id="IPR006076">
    <property type="entry name" value="FAD-dep_OxRdtase"/>
</dbReference>
<dbReference type="PANTHER" id="PTHR11530">
    <property type="entry name" value="D-AMINO ACID OXIDASE"/>
    <property type="match status" value="1"/>
</dbReference>
<dbReference type="PANTHER" id="PTHR11530:SF15">
    <property type="entry name" value="D-AMINO-ACID OXIDASE"/>
    <property type="match status" value="1"/>
</dbReference>
<dbReference type="Pfam" id="PF01266">
    <property type="entry name" value="DAO"/>
    <property type="match status" value="1"/>
</dbReference>
<dbReference type="PIRSF" id="PIRSF000189">
    <property type="entry name" value="D-aa_oxidase"/>
    <property type="match status" value="1"/>
</dbReference>
<dbReference type="SUPFAM" id="SSF54373">
    <property type="entry name" value="FAD-linked reductases, C-terminal domain"/>
    <property type="match status" value="1"/>
</dbReference>
<dbReference type="SUPFAM" id="SSF51971">
    <property type="entry name" value="Nucleotide-binding domain"/>
    <property type="match status" value="1"/>
</dbReference>
<dbReference type="PROSITE" id="PS00677">
    <property type="entry name" value="DAO"/>
    <property type="match status" value="1"/>
</dbReference>
<reference key="1">
    <citation type="journal article" date="1998" name="Biochim. Biophys. Acta">
        <title>Rat D-amino-acid oxidase cDNA: rat D-amino-acid oxidase as an intermediate form between mouse and other mammalian D-amino-acid oxidases.</title>
        <authorList>
            <person name="Konno R."/>
        </authorList>
    </citation>
    <scope>NUCLEOTIDE SEQUENCE [MRNA]</scope>
    <source>
        <strain>Sprague-Dawley</strain>
    </source>
</reference>
<reference key="2">
    <citation type="journal article" date="2004" name="Genome Res.">
        <title>The status, quality, and expansion of the NIH full-length cDNA project: the Mammalian Gene Collection (MGC).</title>
        <authorList>
            <consortium name="The MGC Project Team"/>
        </authorList>
    </citation>
    <scope>NUCLEOTIDE SEQUENCE [LARGE SCALE MRNA]</scope>
    <source>
        <tissue>Kidney</tissue>
    </source>
</reference>
<reference key="3">
    <citation type="journal article" date="1988" name="Histochemistry">
        <title>Heterogenous staining of D-amino acid oxidase in peroxisomes of rat liver and kidney. A light and electron microscopic study.</title>
        <authorList>
            <person name="Angermueller S."/>
            <person name="Fahimi H.D."/>
        </authorList>
    </citation>
    <scope>SUBCELLULAR LOCATION</scope>
    <scope>TISSUE SPECIFICITY</scope>
</reference>
<reference key="4">
    <citation type="journal article" date="1993" name="J. Biol. Chem.">
        <title>Biological role of D-amino acid oxidase and D-aspartate oxidase. Effects of D-amino acids.</title>
        <authorList>
            <person name="D'Aniello A."/>
            <person name="D'Onofrio G."/>
            <person name="Pischetola M."/>
            <person name="D'Aniello G."/>
            <person name="Vetere A."/>
            <person name="Petrucelli L."/>
            <person name="Fisher G.H."/>
        </authorList>
    </citation>
    <scope>FUNCTION</scope>
    <scope>DEVELOPMENTAL STAGE</scope>
    <scope>INDUCTION</scope>
</reference>
<reference key="5">
    <citation type="journal article" date="2007" name="Eur. J. Neurosci.">
        <title>d-Amino acid oxidase and serine racemase in human brain: normal distribution and altered expression in schizophrenia.</title>
        <authorList>
            <person name="Verrall L."/>
            <person name="Walker M."/>
            <person name="Rawlings N."/>
            <person name="Benzel I."/>
            <person name="Kew J.N."/>
            <person name="Harrison P.J."/>
            <person name="Burnet P.W."/>
        </authorList>
    </citation>
    <scope>TISSUE SPECIFICITY</scope>
</reference>
<reference key="6">
    <citation type="journal article" date="2009" name="J. Med. Chem.">
        <title>Discovery, SAR, and pharmacokinetics of a novel 3-hydroxyquinolin-2(1H)-one series of potent D-amino acid oxidase (DAAO) inhibitors.</title>
        <authorList>
            <person name="Duplantier A.J."/>
            <person name="Becker S.L."/>
            <person name="Bohanon M.J."/>
            <person name="Borzilleri K.A."/>
            <person name="Chrunyk B.A."/>
            <person name="Downs J.T."/>
            <person name="Hu L.Y."/>
            <person name="El-Kattan A."/>
            <person name="James L.C."/>
            <person name="Liu S."/>
            <person name="Lu J."/>
            <person name="Maklad N."/>
            <person name="Mansour M.N."/>
            <person name="Mente S."/>
            <person name="Piotrowski M.A."/>
            <person name="Sakya S.M."/>
            <person name="Sheehan S."/>
            <person name="Steyn S.J."/>
            <person name="Strick C.A."/>
            <person name="Williams V.A."/>
            <person name="Zhang L."/>
        </authorList>
    </citation>
    <scope>ACTIVITY REGULATION</scope>
</reference>
<reference key="7">
    <citation type="journal article" date="2010" name="Chem. Biodivers.">
        <title>Indispensable but insufficient role of renal D-amino acid oxidase in chiral inversion of NG-nitro-D-arginine.</title>
        <authorList>
            <person name="Xin Y.F."/>
            <person name="Li X."/>
            <person name="Hao B."/>
            <person name="Gong N."/>
            <person name="Sun W.Q."/>
            <person name="Konno R."/>
            <person name="Wang Y.X."/>
        </authorList>
    </citation>
    <scope>TISSUE SPECIFICITY</scope>
</reference>
<reference key="8">
    <citation type="journal article" date="2011" name="FEBS J.">
        <title>Is rat an appropriate animal model to study the involvement of D-serine catabolism in schizophrenia? Insights from characterization of D-amino acid oxidase.</title>
        <authorList>
            <person name="Frattini L.F."/>
            <person name="Piubelli L."/>
            <person name="Sacchi S."/>
            <person name="Molla G."/>
            <person name="Pollegioni L."/>
        </authorList>
    </citation>
    <scope>FUNCTION</scope>
    <scope>CATALYTIC ACTIVITY</scope>
    <scope>COFACTOR</scope>
    <scope>ACTIVITY REGULATION</scope>
    <scope>BIOPHYSICOCHEMICAL PROPERTIES</scope>
    <scope>SUBUNIT</scope>
    <scope>BIOTECHNOLOGY</scope>
</reference>
<reference key="9">
    <citation type="journal article" date="2011" name="J. Biol. Chem.">
        <title>D-amino acid oxidase activity is inhibited by an interaction with bassoon protein at the presynaptic active zone.</title>
        <authorList>
            <person name="Popiolek M."/>
            <person name="Ross J.F."/>
            <person name="Charych E."/>
            <person name="Chanda P."/>
            <person name="Gundelfinger E.D."/>
            <person name="Moss S.J."/>
            <person name="Brandon N.J."/>
            <person name="Pausch M.H."/>
        </authorList>
    </citation>
    <scope>FUNCTION</scope>
    <scope>CATALYTIC ACTIVITY</scope>
    <scope>INTERACTION WITH BSN</scope>
    <scope>SUBCELLULAR LOCATION</scope>
    <scope>TISSUE SPECIFICITY</scope>
    <scope>IDENTIFICATION BY MASS SPECTROMETRY</scope>
</reference>
<reference key="10">
    <citation type="journal article" date="2013" name="J. Med. Chem.">
        <title>Structural, kinetic, and pharmacodynamic mechanisms of D-amino acid oxidase inhibition by small molecules.</title>
        <authorList>
            <person name="Hopkins S.C."/>
            <person name="Heffernan M.L."/>
            <person name="Saraswat L.D."/>
            <person name="Bowen C.A."/>
            <person name="Melnick L."/>
            <person name="Hardy L.W."/>
            <person name="Orsini M.A."/>
            <person name="Allen M.S."/>
            <person name="Koch P."/>
            <person name="Spear K.L."/>
            <person name="Foglesong R.J."/>
            <person name="Soukri M."/>
            <person name="Chytil M."/>
            <person name="Fang Q.K."/>
            <person name="Jones S.W."/>
            <person name="Varney M.A."/>
            <person name="Panatier A."/>
            <person name="Oliet S.H."/>
            <person name="Pollegioni L."/>
            <person name="Piubelli L."/>
            <person name="Molla G."/>
            <person name="Nardini M."/>
            <person name="Large T.H."/>
        </authorList>
    </citation>
    <scope>FUNCTION</scope>
</reference>
<reference key="11">
    <citation type="journal article" date="2014" name="Biosci. Rep.">
        <title>Novel human D-amino acid oxidase inhibitors stabilize an active-site lid-open conformation.</title>
        <authorList>
            <person name="Terry-Lorenzo R.T."/>
            <person name="Chun L.E."/>
            <person name="Brown S.P."/>
            <person name="Heffernan M.L."/>
            <person name="Fang Q.K."/>
            <person name="Orsini M.A."/>
            <person name="Pollegioni L."/>
            <person name="Hardy L.W."/>
            <person name="Spear K.L."/>
            <person name="Large T.H."/>
        </authorList>
    </citation>
    <scope>ACTIVITY REGULATION</scope>
</reference>
<reference key="12">
    <citation type="journal article" date="2017" name="Arch. Toxicol.">
        <title>Novel insights into renal D-amino acid oxidase accumulation: propiverine changes DAAO localization and peroxisomal size in vivo.</title>
        <authorList>
            <person name="Luks L."/>
            <person name="Sacchi S."/>
            <person name="Pollegioni L."/>
            <person name="Dietrich D.R."/>
        </authorList>
    </citation>
    <scope>SUBCELLULAR LOCATION</scope>
    <scope>TISSUE SPECIFICITY</scope>
</reference>
<reference key="13">
    <citation type="journal article" date="2023" name="Neurochem. Res.">
        <title>Luvadaxistat: A Novel Potent and Selective D-Amino Acid Oxidase Inhibitor Improves Cognitive and Social Deficits in Rodent Models for Schizophrenia.</title>
        <authorList>
            <person name="Fradley R."/>
            <person name="Goetghebeur P."/>
            <person name="Miller D."/>
            <person name="Burley R."/>
            <person name="Almond S."/>
            <person name="Gruart I."/>
            <person name="Masso A."/>
            <person name="Delgado Garcia J.M."/>
            <person name="Zhu B."/>
            <person name="Howley E."/>
            <person name="Neill J.C."/>
            <person name="Grayson B."/>
            <person name="Gaskin P."/>
            <person name="Carlton M."/>
            <person name="Gray I."/>
            <person name="Serrats J."/>
            <person name="Davies C.H."/>
        </authorList>
    </citation>
    <scope>ACTIVITY REGULATION</scope>
</reference>
<reference key="14">
    <citation type="journal article" date="2023" name="Neurochem. Res.">
        <authorList>
            <person name="Fradley R."/>
            <person name="Goetghebeur P."/>
            <person name="Miller D."/>
            <person name="Burley R."/>
            <person name="Almond S."/>
            <person name="Gruart I."/>
            <person name="Masso A."/>
            <person name="Delgado Garcia J.M."/>
            <person name="Zhu B."/>
            <person name="Howley E."/>
            <person name="Neill J.C."/>
            <person name="Grayson B."/>
            <person name="Gaskin P."/>
            <person name="Carlton M."/>
            <person name="Gray I."/>
            <person name="Serrats J."/>
            <person name="Davies C.H."/>
        </authorList>
    </citation>
    <scope>ERRATUM OF PUBMED:37289348</scope>
</reference>
<sequence length="346" mass="38820">MRVAVIGAGVIGLSTALCIHERYHPAQPLHMKIYADRFTPFTTSDVAAGLWQPYLSDPSNPQEAEWNQQTFDHLQSCLHSPNAEKMGLALISGYNLFRDEVPDPFWKSTVLGFRKLTPSELDMFPDYSYGWFNTSLLLEGKSYLSWLTERLTERGVKFIHRKVASFEEVVRGGVDVIINCTGVWAGALQADASLQPGRGQIIQVEAPWIKHFILTHDPSLGIYNSPYIIPGSKTVTLGGVFQLGNWSELNSVHDHNTIWKSCCQLEPTLKNARIMGELTGFRPVRPQVRLERERLRFGSSSAEVIHNYGHGGYGLTIHWGCAMEAANLFGKILEEKNLSRMPPSHL</sequence>
<comment type="function">
    <text evidence="2 3 7 8 9 14">Catalyzes the oxidative deamination of D-amino acids with broad substrate specificity (PubMed:21700703, PubMed:21981077). Required to catabolize D-amino acids synthesized endogenously, of gastrointestinal bacterial origin or obtained from the diet, and to use these as nutrients (By similarity). Regulates the level of D-amino acid neurotransmitters in the brain, such as D-serine, a co-agonist of N-methyl D-aspartate (NMDA) receptors, and may modulate synaptic transmission (PubMed:23631755). Catalyzes the first step of the racemization of D-DOPA to L-DOPA, for possible use in an alternative dopamine biosynthesis pathway (By similarity). Also catalyzes the first step of the chiral inversion of N(gamma)-nitro-D-arginine methyl ester (D-NNA) to its L-enantiomer L-NNA that acts as a nitric oxide synthase inhibitor (By similarity). The hydrogen peroxide produced in the reaction provides protection against microbial infection; it contributes to the oxidative killing activity of phagocytic leukocytes and protects against bacterial colonization of the small intestine (By similarity). Enzyme secreted into the lumen of the intestine may not be catalytically active and could instead be proteolytically cleaved into peptides with antimicrobial activity (By similarity). The hydrogen peroxide produced in the reaction may also play a role in promoting cellular senescence in response to DNA damage (By similarity). Could act as a detoxifying agent which removes D-amino acids accumulated during aging (PubMed:7903300).</text>
</comment>
<comment type="catalytic activity">
    <reaction evidence="8 16">
        <text>a D-alpha-amino acid + O2 + H2O = a 2-oxocarboxylate + H2O2 + NH4(+)</text>
        <dbReference type="Rhea" id="RHEA:21816"/>
        <dbReference type="ChEBI" id="CHEBI:15377"/>
        <dbReference type="ChEBI" id="CHEBI:15379"/>
        <dbReference type="ChEBI" id="CHEBI:16240"/>
        <dbReference type="ChEBI" id="CHEBI:28938"/>
        <dbReference type="ChEBI" id="CHEBI:35179"/>
        <dbReference type="ChEBI" id="CHEBI:59871"/>
        <dbReference type="EC" id="1.4.3.3"/>
    </reaction>
</comment>
<comment type="catalytic activity">
    <reaction evidence="8 16">
        <text>D-alanine + O2 + H2O = pyruvate + H2O2 + NH4(+)</text>
        <dbReference type="Rhea" id="RHEA:22688"/>
        <dbReference type="ChEBI" id="CHEBI:15361"/>
        <dbReference type="ChEBI" id="CHEBI:15377"/>
        <dbReference type="ChEBI" id="CHEBI:15379"/>
        <dbReference type="ChEBI" id="CHEBI:16240"/>
        <dbReference type="ChEBI" id="CHEBI:28938"/>
        <dbReference type="ChEBI" id="CHEBI:57416"/>
    </reaction>
    <physiologicalReaction direction="left-to-right" evidence="8 16">
        <dbReference type="Rhea" id="RHEA:22689"/>
    </physiologicalReaction>
</comment>
<comment type="catalytic activity">
    <reaction evidence="2">
        <text>D-cysteine + O2 + H2O = 2-oxo-3-sulfanylpropanoate + H2O2 + NH4(+)</text>
        <dbReference type="Rhea" id="RHEA:78791"/>
        <dbReference type="ChEBI" id="CHEBI:15377"/>
        <dbReference type="ChEBI" id="CHEBI:15379"/>
        <dbReference type="ChEBI" id="CHEBI:16240"/>
        <dbReference type="ChEBI" id="CHEBI:28938"/>
        <dbReference type="ChEBI" id="CHEBI:35236"/>
        <dbReference type="ChEBI" id="CHEBI:57678"/>
    </reaction>
    <physiologicalReaction direction="left-to-right" evidence="2">
        <dbReference type="Rhea" id="RHEA:78792"/>
    </physiologicalReaction>
</comment>
<comment type="catalytic activity">
    <reaction evidence="2">
        <text>D-dopa + O2 + H2O = 3-(3,4-dihydroxyphenyl)pyruvate + H2O2 + NH4(+)</text>
        <dbReference type="Rhea" id="RHEA:70971"/>
        <dbReference type="ChEBI" id="CHEBI:15377"/>
        <dbReference type="ChEBI" id="CHEBI:15379"/>
        <dbReference type="ChEBI" id="CHEBI:16240"/>
        <dbReference type="ChEBI" id="CHEBI:28938"/>
        <dbReference type="ChEBI" id="CHEBI:29055"/>
        <dbReference type="ChEBI" id="CHEBI:149689"/>
    </reaction>
    <physiologicalReaction direction="left-to-right" evidence="2">
        <dbReference type="Rhea" id="RHEA:70972"/>
    </physiologicalReaction>
</comment>
<comment type="catalytic activity">
    <reaction evidence="2">
        <text>D-leucine + O2 + H2O = 4-methyl-2-oxopentanoate + H2O2 + NH4(+)</text>
        <dbReference type="Rhea" id="RHEA:78211"/>
        <dbReference type="ChEBI" id="CHEBI:15377"/>
        <dbReference type="ChEBI" id="CHEBI:15379"/>
        <dbReference type="ChEBI" id="CHEBI:16240"/>
        <dbReference type="ChEBI" id="CHEBI:17865"/>
        <dbReference type="ChEBI" id="CHEBI:28938"/>
        <dbReference type="ChEBI" id="CHEBI:143079"/>
    </reaction>
    <physiologicalReaction direction="left-to-right" evidence="2">
        <dbReference type="Rhea" id="RHEA:78212"/>
    </physiologicalReaction>
</comment>
<comment type="catalytic activity">
    <reaction evidence="1">
        <text>D-lysine + O2 + H2O = 6-amino-2-oxohexanoate + H2O2 + NH4(+)</text>
        <dbReference type="Rhea" id="RHEA:37583"/>
        <dbReference type="ChEBI" id="CHEBI:15377"/>
        <dbReference type="ChEBI" id="CHEBI:15379"/>
        <dbReference type="ChEBI" id="CHEBI:16240"/>
        <dbReference type="ChEBI" id="CHEBI:28938"/>
        <dbReference type="ChEBI" id="CHEBI:32557"/>
        <dbReference type="ChEBI" id="CHEBI:58183"/>
        <dbReference type="EC" id="1.4.3.3"/>
    </reaction>
    <physiologicalReaction direction="left-to-right" evidence="1">
        <dbReference type="Rhea" id="RHEA:37584"/>
    </physiologicalReaction>
</comment>
<comment type="catalytic activity">
    <reaction evidence="1">
        <text>D-methionine + O2 + H2O = 4-methylsulfanyl-2-oxobutanoate + H2O2 + NH4(+)</text>
        <dbReference type="Rhea" id="RHEA:78207"/>
        <dbReference type="ChEBI" id="CHEBI:15377"/>
        <dbReference type="ChEBI" id="CHEBI:15379"/>
        <dbReference type="ChEBI" id="CHEBI:16240"/>
        <dbReference type="ChEBI" id="CHEBI:16723"/>
        <dbReference type="ChEBI" id="CHEBI:28938"/>
        <dbReference type="ChEBI" id="CHEBI:57932"/>
    </reaction>
    <physiologicalReaction direction="left-to-right" evidence="1">
        <dbReference type="Rhea" id="RHEA:78208"/>
    </physiologicalReaction>
</comment>
<comment type="catalytic activity">
    <reaction evidence="8">
        <text>D-phenylalanine + O2 + H2O = 3-phenylpyruvate + H2O2 + NH4(+)</text>
        <dbReference type="Rhea" id="RHEA:70963"/>
        <dbReference type="ChEBI" id="CHEBI:15377"/>
        <dbReference type="ChEBI" id="CHEBI:15379"/>
        <dbReference type="ChEBI" id="CHEBI:16240"/>
        <dbReference type="ChEBI" id="CHEBI:18005"/>
        <dbReference type="ChEBI" id="CHEBI:28938"/>
        <dbReference type="ChEBI" id="CHEBI:57981"/>
    </reaction>
    <physiologicalReaction direction="left-to-right" evidence="8">
        <dbReference type="Rhea" id="RHEA:70964"/>
    </physiologicalReaction>
</comment>
<comment type="catalytic activity">
    <reaction evidence="8">
        <text>D-proline + O2 = 1-pyrroline-2-carboxylate + H2O2</text>
        <dbReference type="Rhea" id="RHEA:78259"/>
        <dbReference type="ChEBI" id="CHEBI:15379"/>
        <dbReference type="ChEBI" id="CHEBI:16240"/>
        <dbReference type="ChEBI" id="CHEBI:39785"/>
        <dbReference type="ChEBI" id="CHEBI:57726"/>
    </reaction>
    <physiologicalReaction direction="left-to-right" evidence="8">
        <dbReference type="Rhea" id="RHEA:78260"/>
    </physiologicalReaction>
</comment>
<comment type="catalytic activity">
    <reaction evidence="8">
        <text>D-serine + O2 + H2O = 3-hydroxypyruvate + H2O2 + NH4(+)</text>
        <dbReference type="Rhea" id="RHEA:70951"/>
        <dbReference type="ChEBI" id="CHEBI:15377"/>
        <dbReference type="ChEBI" id="CHEBI:15379"/>
        <dbReference type="ChEBI" id="CHEBI:16240"/>
        <dbReference type="ChEBI" id="CHEBI:17180"/>
        <dbReference type="ChEBI" id="CHEBI:28938"/>
        <dbReference type="ChEBI" id="CHEBI:35247"/>
    </reaction>
    <physiologicalReaction direction="left-to-right" evidence="8">
        <dbReference type="Rhea" id="RHEA:70952"/>
    </physiologicalReaction>
</comment>
<comment type="catalytic activity">
    <reaction evidence="8">
        <text>D-tryptophan + O2 + H2O = indole-3-pyruvate + H2O2 + NH4(+)</text>
        <dbReference type="Rhea" id="RHEA:78247"/>
        <dbReference type="ChEBI" id="CHEBI:15377"/>
        <dbReference type="ChEBI" id="CHEBI:15379"/>
        <dbReference type="ChEBI" id="CHEBI:16240"/>
        <dbReference type="ChEBI" id="CHEBI:17640"/>
        <dbReference type="ChEBI" id="CHEBI:28938"/>
        <dbReference type="ChEBI" id="CHEBI:57719"/>
    </reaction>
    <physiologicalReaction direction="left-to-right" evidence="8">
        <dbReference type="Rhea" id="RHEA:78248"/>
    </physiologicalReaction>
</comment>
<comment type="catalytic activity">
    <reaction evidence="2">
        <text>D-valine + O2 + H2O = 3-methyl-2-oxobutanoate + H2O2 + NH4(+)</text>
        <dbReference type="Rhea" id="RHEA:78203"/>
        <dbReference type="ChEBI" id="CHEBI:11851"/>
        <dbReference type="ChEBI" id="CHEBI:15377"/>
        <dbReference type="ChEBI" id="CHEBI:15379"/>
        <dbReference type="ChEBI" id="CHEBI:16240"/>
        <dbReference type="ChEBI" id="CHEBI:28938"/>
        <dbReference type="ChEBI" id="CHEBI:74338"/>
    </reaction>
    <physiologicalReaction direction="left-to-right" evidence="2">
        <dbReference type="Rhea" id="RHEA:78204"/>
    </physiologicalReaction>
</comment>
<comment type="cofactor">
    <cofactor evidence="8">
        <name>FAD</name>
        <dbReference type="ChEBI" id="CHEBI:57692"/>
    </cofactor>
</comment>
<comment type="activity regulation">
    <text evidence="5 8 10 13">Inhibited by benzoate, anthranilate and luvadaxistat (PubMed:21981077, PubMed:37289348). Inhibited by 3-hydroxyquinolin-2(1h)-one, 4-hydroxy-6-[2-(7-hydroxy-2-oxo-4-phenyl-2h-chromen-6- Yl)ethyl]pyridazin-3(2h)-one and 3-(7-hydroxy-2-oxo-4-phenyl-2h-chromen-6-Yl)propanoic acid (PubMed:19438227, PubMed:25001371).</text>
</comment>
<comment type="biophysicochemical properties">
    <kinetics>
        <KM evidence="8">140 mM for D-alanine (at 25 degrees Celsius and at pH 8.3)</KM>
        <KM evidence="8">310 mM for D-serine (at 25 degrees Celsius and at pH 8.3)</KM>
        <KM evidence="8">86 mM for D-proline (at 25 degrees Celsius and at pH 8.3)</KM>
        <KM evidence="8">15 mM for D-tryptophan (at 25 degrees Celsius and at pH 8.3)</KM>
        <KM evidence="8">35 mM for D-phenylalanine (at 25 degrees Celsius and at pH 8.3)</KM>
        <text evidence="8">kcat is 27 sec(-1) with D-alanine as substrate (at 25 degrees Celsius and at pH 8.3) (PubMed:21981077). kcat is 6.4 sec(-1) with D-serine as substrate (at 25 degrees Celsius and at pH 8.3) (PubMed:21981077). kcat is 47 sec(-1) with D-proline as substrate (at 25 degrees Celsius and at pH 8.3) (PubMed:21981077). kcat is 3.7 sec(-1) with D-tryptophan as substrate (at 25 degrees Celsius and at pH 8.3) (PubMed:21981077). kcat is 8.5 sec(-1) with D-phenylalanine as substrate (at 25 degrees Celsius and at pH 8.3) (PubMed:21981077).</text>
    </kinetics>
</comment>
<comment type="subunit">
    <text evidence="7 8">Monomer (PubMed:21981077). Interacts with BSN (via coiled region); the interaction is direct and inhibits DAO enzyme activity (PubMed:21700703).</text>
</comment>
<comment type="subcellular location">
    <subcellularLocation>
        <location evidence="11 12">Peroxisome matrix</location>
    </subcellularLocation>
    <subcellularLocation>
        <location evidence="2">Cytoplasm</location>
        <location evidence="2">Cytosol</location>
    </subcellularLocation>
    <subcellularLocation>
        <location evidence="7">Presynaptic active zone</location>
    </subcellularLocation>
    <subcellularLocation>
        <location evidence="3">Secreted</location>
    </subcellularLocation>
    <text evidence="2 3 7">Transiently present in the cytosol before being delivered to the peroxisomes (By similarity). In the cerebellum, a fraction of protein localizes to the presynaptic active zone, where its activity is regulated by protein BSN (PubMed:21700703). Secreted into the lumen of the small intestine (By similarity).</text>
</comment>
<comment type="tissue specificity">
    <text evidence="4 6 7 11 12">Expressed in the cerebellum, liver and proximal tubules of the renal cortex (at protein level) (PubMed:17880399, PubMed:20564560, PubMed:21700703, PubMed:26961980, PubMed:2896644). Absent from spleen (at protein level) (PubMed:21700703).</text>
</comment>
<comment type="developmental stage">
    <text evidence="14">In the liver and kidney, progressively increases during postnatal stages (at protein level).</text>
</comment>
<comment type="induction">
    <text evidence="4 14">Increased in pups born to mothers fed D-alanine during pregnancy and suckling; not induced when mothers fed D-aspartate (PubMed:7903300). Not induced further in the cerebellum following two weeks of intraperitoneal injections of the antipsychotic haloperidol (PubMed:17880399).</text>
</comment>
<comment type="PTM">
    <text evidence="2">Phosphorylated in the cerebellum; probably not by PRKACA, PRKCA or PRKCE.</text>
</comment>
<comment type="PTM">
    <text evidence="2">May be S-nitrosylated, which partially inactivates the enzyme.</text>
</comment>
<comment type="biotechnology">
    <text evidence="8">In comparison to human DAO, has relatively poor activity on D-serine and other substrates, raising doubts regarding the use of rat as a model system for testing drugs against schizophrenia or amyotrophic lateral sclerosis.</text>
</comment>
<comment type="similarity">
    <text evidence="15">Belongs to the DAMOX/DASOX family.</text>
</comment>
<feature type="chain" id="PRO_0000162765" description="D-amino-acid oxidase">
    <location>
        <begin position="1"/>
        <end position="346"/>
    </location>
</feature>
<feature type="region of interest" description="Required for protein stability" evidence="2">
    <location>
        <begin position="1"/>
        <end position="16"/>
    </location>
</feature>
<feature type="region of interest" description="Active site lid that may open upon substrate/product migration in and out of the active site and close to increase the hydrophobicity of the active site, to make the hydride transfer reaction more efficient" evidence="1">
    <location>
        <begin position="215"/>
        <end position="227"/>
    </location>
</feature>
<feature type="short sequence motif" description="Microbody targeting signal">
    <location>
        <begin position="344"/>
        <end position="346"/>
    </location>
</feature>
<feature type="binding site" evidence="2">
    <location>
        <position position="8"/>
    </location>
    <ligand>
        <name>FAD</name>
        <dbReference type="ChEBI" id="CHEBI:57692"/>
    </ligand>
</feature>
<feature type="binding site" evidence="2">
    <location>
        <position position="9"/>
    </location>
    <ligand>
        <name>FAD</name>
        <dbReference type="ChEBI" id="CHEBI:57692"/>
    </ligand>
</feature>
<feature type="binding site" evidence="2">
    <location>
        <position position="10"/>
    </location>
    <ligand>
        <name>FAD</name>
        <dbReference type="ChEBI" id="CHEBI:57692"/>
    </ligand>
</feature>
<feature type="binding site" evidence="2">
    <location>
        <position position="11"/>
    </location>
    <ligand>
        <name>FAD</name>
        <dbReference type="ChEBI" id="CHEBI:57692"/>
    </ligand>
</feature>
<feature type="binding site" evidence="2">
    <location>
        <position position="36"/>
    </location>
    <ligand>
        <name>FAD</name>
        <dbReference type="ChEBI" id="CHEBI:57692"/>
    </ligand>
</feature>
<feature type="binding site" evidence="2">
    <location>
        <position position="37"/>
    </location>
    <ligand>
        <name>FAD</name>
        <dbReference type="ChEBI" id="CHEBI:57692"/>
    </ligand>
</feature>
<feature type="binding site" evidence="2">
    <location>
        <position position="42"/>
    </location>
    <ligand>
        <name>FAD</name>
        <dbReference type="ChEBI" id="CHEBI:57692"/>
    </ligand>
</feature>
<feature type="binding site" evidence="2">
    <location>
        <position position="43"/>
    </location>
    <ligand>
        <name>FAD</name>
        <dbReference type="ChEBI" id="CHEBI:57692"/>
    </ligand>
</feature>
<feature type="binding site" evidence="2">
    <location>
        <position position="44"/>
    </location>
    <ligand>
        <name>FAD</name>
        <dbReference type="ChEBI" id="CHEBI:57692"/>
    </ligand>
</feature>
<feature type="binding site" evidence="1">
    <location>
        <position position="48"/>
    </location>
    <ligand>
        <name>FAD</name>
        <dbReference type="ChEBI" id="CHEBI:57692"/>
    </ligand>
</feature>
<feature type="binding site" evidence="2">
    <location>
        <position position="49"/>
    </location>
    <ligand>
        <name>FAD</name>
        <dbReference type="ChEBI" id="CHEBI:57692"/>
    </ligand>
</feature>
<feature type="binding site" evidence="2">
    <location>
        <position position="50"/>
    </location>
    <ligand>
        <name>FAD</name>
        <dbReference type="ChEBI" id="CHEBI:57692"/>
    </ligand>
</feature>
<feature type="binding site" evidence="2">
    <location>
        <position position="52"/>
    </location>
    <ligand>
        <name>D-dopa</name>
        <dbReference type="ChEBI" id="CHEBI:149689"/>
    </ligand>
</feature>
<feature type="binding site" evidence="1">
    <location>
        <position position="162"/>
    </location>
    <ligand>
        <name>FAD</name>
        <dbReference type="ChEBI" id="CHEBI:57692"/>
    </ligand>
</feature>
<feature type="binding site" evidence="2">
    <location>
        <position position="163"/>
    </location>
    <ligand>
        <name>FAD</name>
        <dbReference type="ChEBI" id="CHEBI:57692"/>
    </ligand>
</feature>
<feature type="binding site" evidence="2">
    <location>
        <position position="181"/>
    </location>
    <ligand>
        <name>FAD</name>
        <dbReference type="ChEBI" id="CHEBI:57692"/>
    </ligand>
</feature>
<feature type="binding site" evidence="2">
    <location>
        <position position="223"/>
    </location>
    <ligand>
        <name>D-serine</name>
        <dbReference type="ChEBI" id="CHEBI:35247"/>
    </ligand>
</feature>
<feature type="binding site" evidence="1">
    <location>
        <position position="227"/>
    </location>
    <ligand>
        <name>D-proline</name>
        <dbReference type="ChEBI" id="CHEBI:57726"/>
    </ligand>
</feature>
<feature type="binding site" evidence="2">
    <location>
        <position position="227"/>
    </location>
    <ligand>
        <name>D-serine</name>
        <dbReference type="ChEBI" id="CHEBI:35247"/>
    </ligand>
</feature>
<feature type="binding site" evidence="2">
    <location>
        <position position="282"/>
    </location>
    <ligand>
        <name>D-dopa</name>
        <dbReference type="ChEBI" id="CHEBI:149689"/>
    </ligand>
</feature>
<feature type="binding site" evidence="1">
    <location>
        <position position="282"/>
    </location>
    <ligand>
        <name>D-proline</name>
        <dbReference type="ChEBI" id="CHEBI:57726"/>
    </ligand>
</feature>
<feature type="binding site" evidence="2">
    <location>
        <position position="282"/>
    </location>
    <ligand>
        <name>D-serine</name>
        <dbReference type="ChEBI" id="CHEBI:35247"/>
    </ligand>
</feature>
<feature type="binding site" evidence="2">
    <location>
        <position position="282"/>
    </location>
    <ligand>
        <name>FAD</name>
        <dbReference type="ChEBI" id="CHEBI:57692"/>
    </ligand>
</feature>
<feature type="binding site" evidence="2">
    <location>
        <position position="311"/>
    </location>
    <ligand>
        <name>FAD</name>
        <dbReference type="ChEBI" id="CHEBI:57692"/>
    </ligand>
</feature>
<feature type="binding site" evidence="2">
    <location>
        <position position="312"/>
    </location>
    <ligand>
        <name>D-dopa</name>
        <dbReference type="ChEBI" id="CHEBI:149689"/>
    </ligand>
</feature>
<feature type="binding site" evidence="1">
    <location>
        <position position="312"/>
    </location>
    <ligand>
        <name>D-proline</name>
        <dbReference type="ChEBI" id="CHEBI:57726"/>
    </ligand>
</feature>
<feature type="binding site" evidence="2">
    <location>
        <position position="312"/>
    </location>
    <ligand>
        <name>D-serine</name>
        <dbReference type="ChEBI" id="CHEBI:35247"/>
    </ligand>
</feature>
<feature type="binding site" evidence="2">
    <location>
        <position position="312"/>
    </location>
    <ligand>
        <name>FAD</name>
        <dbReference type="ChEBI" id="CHEBI:57692"/>
    </ligand>
</feature>
<feature type="binding site" evidence="2">
    <location>
        <position position="314"/>
    </location>
    <ligand>
        <name>FAD</name>
        <dbReference type="ChEBI" id="CHEBI:57692"/>
    </ligand>
</feature>
<feature type="binding site" evidence="2">
    <location>
        <position position="315"/>
    </location>
    <ligand>
        <name>FAD</name>
        <dbReference type="ChEBI" id="CHEBI:57692"/>
    </ligand>
</feature>
<feature type="binding site" evidence="2">
    <location>
        <position position="316"/>
    </location>
    <ligand>
        <name>FAD</name>
        <dbReference type="ChEBI" id="CHEBI:57692"/>
    </ligand>
</feature>
<organism>
    <name type="scientific">Rattus norvegicus</name>
    <name type="common">Rat</name>
    <dbReference type="NCBI Taxonomy" id="10116"/>
    <lineage>
        <taxon>Eukaryota</taxon>
        <taxon>Metazoa</taxon>
        <taxon>Chordata</taxon>
        <taxon>Craniata</taxon>
        <taxon>Vertebrata</taxon>
        <taxon>Euteleostomi</taxon>
        <taxon>Mammalia</taxon>
        <taxon>Eutheria</taxon>
        <taxon>Euarchontoglires</taxon>
        <taxon>Glires</taxon>
        <taxon>Rodentia</taxon>
        <taxon>Myomorpha</taxon>
        <taxon>Muroidea</taxon>
        <taxon>Muridae</taxon>
        <taxon>Murinae</taxon>
        <taxon>Rattus</taxon>
    </lineage>
</organism>
<keyword id="KW-0966">Cell projection</keyword>
<keyword id="KW-0963">Cytoplasm</keyword>
<keyword id="KW-0274">FAD</keyword>
<keyword id="KW-0285">Flavoprotein</keyword>
<keyword id="KW-0560">Oxidoreductase</keyword>
<keyword id="KW-0576">Peroxisome</keyword>
<keyword id="KW-0597">Phosphoprotein</keyword>
<keyword id="KW-1185">Reference proteome</keyword>
<keyword id="KW-0702">S-nitrosylation</keyword>
<keyword id="KW-0964">Secreted</keyword>
<keyword id="KW-0770">Synapse</keyword>